<protein>
    <recommendedName>
        <fullName evidence="1">Large ribosomal subunit protein bL36A</fullName>
    </recommendedName>
    <alternativeName>
        <fullName evidence="2">50S ribosomal protein L36 1</fullName>
    </alternativeName>
</protein>
<accession>A7MWH9</accession>
<keyword id="KW-0687">Ribonucleoprotein</keyword>
<keyword id="KW-0689">Ribosomal protein</keyword>
<name>RL361_VIBC1</name>
<proteinExistence type="inferred from homology"/>
<dbReference type="EMBL" id="CP000789">
    <property type="protein sequence ID" value="ABU69752.1"/>
    <property type="molecule type" value="Genomic_DNA"/>
</dbReference>
<dbReference type="SMR" id="A7MWH9"/>
<dbReference type="KEGG" id="vha:VIBHAR_00751"/>
<dbReference type="PATRIC" id="fig|338187.36.peg.695"/>
<dbReference type="Proteomes" id="UP000008152">
    <property type="component" value="Chromosome I"/>
</dbReference>
<dbReference type="GO" id="GO:0005737">
    <property type="term" value="C:cytoplasm"/>
    <property type="evidence" value="ECO:0007669"/>
    <property type="project" value="UniProtKB-ARBA"/>
</dbReference>
<dbReference type="GO" id="GO:1990904">
    <property type="term" value="C:ribonucleoprotein complex"/>
    <property type="evidence" value="ECO:0007669"/>
    <property type="project" value="UniProtKB-KW"/>
</dbReference>
<dbReference type="GO" id="GO:0005840">
    <property type="term" value="C:ribosome"/>
    <property type="evidence" value="ECO:0007669"/>
    <property type="project" value="UniProtKB-KW"/>
</dbReference>
<dbReference type="GO" id="GO:0003735">
    <property type="term" value="F:structural constituent of ribosome"/>
    <property type="evidence" value="ECO:0007669"/>
    <property type="project" value="InterPro"/>
</dbReference>
<dbReference type="GO" id="GO:0006412">
    <property type="term" value="P:translation"/>
    <property type="evidence" value="ECO:0007669"/>
    <property type="project" value="UniProtKB-UniRule"/>
</dbReference>
<dbReference type="HAMAP" id="MF_00251">
    <property type="entry name" value="Ribosomal_bL36"/>
    <property type="match status" value="1"/>
</dbReference>
<dbReference type="InterPro" id="IPR000473">
    <property type="entry name" value="Ribosomal_bL36"/>
</dbReference>
<dbReference type="InterPro" id="IPR035977">
    <property type="entry name" value="Ribosomal_bL36_sp"/>
</dbReference>
<dbReference type="NCBIfam" id="TIGR01022">
    <property type="entry name" value="rpmJ_bact"/>
    <property type="match status" value="1"/>
</dbReference>
<dbReference type="PANTHER" id="PTHR42888">
    <property type="entry name" value="50S RIBOSOMAL PROTEIN L36, CHLOROPLASTIC"/>
    <property type="match status" value="1"/>
</dbReference>
<dbReference type="PANTHER" id="PTHR42888:SF1">
    <property type="entry name" value="LARGE RIBOSOMAL SUBUNIT PROTEIN BL36C"/>
    <property type="match status" value="1"/>
</dbReference>
<dbReference type="Pfam" id="PF00444">
    <property type="entry name" value="Ribosomal_L36"/>
    <property type="match status" value="1"/>
</dbReference>
<dbReference type="SUPFAM" id="SSF57840">
    <property type="entry name" value="Ribosomal protein L36"/>
    <property type="match status" value="1"/>
</dbReference>
<dbReference type="PROSITE" id="PS00828">
    <property type="entry name" value="RIBOSOMAL_L36"/>
    <property type="match status" value="1"/>
</dbReference>
<reference key="1">
    <citation type="submission" date="2007-08" db="EMBL/GenBank/DDBJ databases">
        <authorList>
            <consortium name="The Vibrio harveyi Genome Sequencing Project"/>
            <person name="Bassler B."/>
            <person name="Clifton S.W."/>
            <person name="Fulton L."/>
            <person name="Delehaunty K."/>
            <person name="Fronick C."/>
            <person name="Harrison M."/>
            <person name="Markivic C."/>
            <person name="Fulton R."/>
            <person name="Tin-Wollam A.-M."/>
            <person name="Shah N."/>
            <person name="Pepin K."/>
            <person name="Nash W."/>
            <person name="Thiruvilangam P."/>
            <person name="Bhonagiri V."/>
            <person name="Waters C."/>
            <person name="Tu K.C."/>
            <person name="Irgon J."/>
            <person name="Wilson R.K."/>
        </authorList>
    </citation>
    <scope>NUCLEOTIDE SEQUENCE [LARGE SCALE GENOMIC DNA]</scope>
    <source>
        <strain>ATCC BAA-1116 / BB120</strain>
    </source>
</reference>
<gene>
    <name evidence="1" type="primary">rpmJ1</name>
    <name type="ordered locus">VIBHAR_00751</name>
</gene>
<feature type="chain" id="PRO_0000344729" description="Large ribosomal subunit protein bL36A">
    <location>
        <begin position="1"/>
        <end position="37"/>
    </location>
</feature>
<organism>
    <name type="scientific">Vibrio campbellii (strain ATCC BAA-1116)</name>
    <dbReference type="NCBI Taxonomy" id="2902295"/>
    <lineage>
        <taxon>Bacteria</taxon>
        <taxon>Pseudomonadati</taxon>
        <taxon>Pseudomonadota</taxon>
        <taxon>Gammaproteobacteria</taxon>
        <taxon>Vibrionales</taxon>
        <taxon>Vibrionaceae</taxon>
        <taxon>Vibrio</taxon>
    </lineage>
</organism>
<evidence type="ECO:0000255" key="1">
    <source>
        <dbReference type="HAMAP-Rule" id="MF_00251"/>
    </source>
</evidence>
<evidence type="ECO:0000305" key="2"/>
<comment type="similarity">
    <text evidence="1">Belongs to the bacterial ribosomal protein bL36 family.</text>
</comment>
<sequence length="37" mass="4278">MKVRASVKKICRNCKVIKRNGVVRVICSEPKHKQRQG</sequence>